<protein>
    <recommendedName>
        <fullName>Phenylalanine ammonia-lyase 1</fullName>
        <ecNumber evidence="2">4.3.1.24</ecNumber>
    </recommendedName>
</protein>
<comment type="function">
    <text evidence="2">This is a key enzyme of plant metabolism catalyzing the first reaction in the biosynthesis from L-phenylalanine of a wide variety of natural products based on the phenylpropane skeleton.</text>
</comment>
<comment type="catalytic activity">
    <reaction evidence="2">
        <text>L-phenylalanine = (E)-cinnamate + NH4(+)</text>
        <dbReference type="Rhea" id="RHEA:21384"/>
        <dbReference type="ChEBI" id="CHEBI:15669"/>
        <dbReference type="ChEBI" id="CHEBI:28938"/>
        <dbReference type="ChEBI" id="CHEBI:58095"/>
        <dbReference type="EC" id="4.3.1.24"/>
    </reaction>
</comment>
<comment type="pathway">
    <text evidence="5">Phenylpropanoid metabolism; trans-cinnamate biosynthesis; trans-cinnamate from L-phenylalanine: step 1/1.</text>
</comment>
<comment type="subunit">
    <text evidence="2">Homotetramer.</text>
</comment>
<comment type="subcellular location">
    <subcellularLocation>
        <location evidence="5">Cytoplasm</location>
    </subcellularLocation>
</comment>
<comment type="PTM">
    <text evidence="3">Contains an active site 4-methylidene-imidazol-5-one (MIO), which is formed autocatalytically by cyclization and dehydration of residues Ala-Ser-Gly.</text>
</comment>
<comment type="similarity">
    <text evidence="5">Belongs to the PAL/histidase family.</text>
</comment>
<proteinExistence type="evidence at transcript level"/>
<feature type="chain" id="PRO_0000215417" description="Phenylalanine ammonia-lyase 1">
    <location>
        <begin position="1"/>
        <end position="717"/>
    </location>
</feature>
<feature type="active site" description="Proton donor/acceptor" evidence="3">
    <location>
        <position position="109"/>
    </location>
</feature>
<feature type="binding site" evidence="3">
    <location>
        <position position="261"/>
    </location>
    <ligand>
        <name>(E)-cinnamate</name>
        <dbReference type="ChEBI" id="CHEBI:15669"/>
    </ligand>
</feature>
<feature type="binding site" evidence="3">
    <location>
        <position position="349"/>
    </location>
    <ligand>
        <name>(E)-cinnamate</name>
        <dbReference type="ChEBI" id="CHEBI:15669"/>
    </ligand>
</feature>
<feature type="binding site" evidence="3">
    <location>
        <position position="355"/>
    </location>
    <ligand>
        <name>(E)-cinnamate</name>
        <dbReference type="ChEBI" id="CHEBI:15669"/>
    </ligand>
</feature>
<feature type="binding site" evidence="3">
    <location>
        <position position="385"/>
    </location>
    <ligand>
        <name>(E)-cinnamate</name>
        <dbReference type="ChEBI" id="CHEBI:15669"/>
    </ligand>
</feature>
<feature type="binding site" evidence="1">
    <location>
        <position position="457"/>
    </location>
    <ligand>
        <name>(E)-cinnamate</name>
        <dbReference type="ChEBI" id="CHEBI:15669"/>
    </ligand>
</feature>
<feature type="binding site" evidence="1">
    <location>
        <position position="485"/>
    </location>
    <ligand>
        <name>(E)-cinnamate</name>
        <dbReference type="ChEBI" id="CHEBI:15669"/>
    </ligand>
</feature>
<feature type="binding site" evidence="3">
    <location>
        <position position="488"/>
    </location>
    <ligand>
        <name>(E)-cinnamate</name>
        <dbReference type="ChEBI" id="CHEBI:15669"/>
    </ligand>
</feature>
<feature type="modified residue" description="2,3-didehydroalanine (Ser)" evidence="4">
    <location>
        <position position="204"/>
    </location>
</feature>
<feature type="cross-link" description="5-imidazolinone (Ala-Gly)" evidence="3">
    <location>
        <begin position="203"/>
        <end position="205"/>
    </location>
</feature>
<accession>O64963</accession>
<organism>
    <name type="scientific">Prunus avium</name>
    <name type="common">Cherry</name>
    <name type="synonym">Cerasus avium</name>
    <dbReference type="NCBI Taxonomy" id="42229"/>
    <lineage>
        <taxon>Eukaryota</taxon>
        <taxon>Viridiplantae</taxon>
        <taxon>Streptophyta</taxon>
        <taxon>Embryophyta</taxon>
        <taxon>Tracheophyta</taxon>
        <taxon>Spermatophyta</taxon>
        <taxon>Magnoliopsida</taxon>
        <taxon>eudicotyledons</taxon>
        <taxon>Gunneridae</taxon>
        <taxon>Pentapetalae</taxon>
        <taxon>rosids</taxon>
        <taxon>fabids</taxon>
        <taxon>Rosales</taxon>
        <taxon>Rosaceae</taxon>
        <taxon>Amygdaloideae</taxon>
        <taxon>Amygdaleae</taxon>
        <taxon>Prunus</taxon>
    </lineage>
</organism>
<dbReference type="EC" id="4.3.1.24" evidence="2"/>
<dbReference type="EMBL" id="AF036948">
    <property type="protein sequence ID" value="AAC78457.1"/>
    <property type="molecule type" value="mRNA"/>
</dbReference>
<dbReference type="SMR" id="O64963"/>
<dbReference type="UniPathway" id="UPA00713">
    <property type="reaction ID" value="UER00725"/>
</dbReference>
<dbReference type="Proteomes" id="UP000515124">
    <property type="component" value="Unplaced"/>
</dbReference>
<dbReference type="GO" id="GO:0005737">
    <property type="term" value="C:cytoplasm"/>
    <property type="evidence" value="ECO:0007669"/>
    <property type="project" value="UniProtKB-SubCell"/>
</dbReference>
<dbReference type="GO" id="GO:0045548">
    <property type="term" value="F:phenylalanine ammonia-lyase activity"/>
    <property type="evidence" value="ECO:0007669"/>
    <property type="project" value="UniProtKB-EC"/>
</dbReference>
<dbReference type="GO" id="GO:0009800">
    <property type="term" value="P:cinnamic acid biosynthetic process"/>
    <property type="evidence" value="ECO:0007669"/>
    <property type="project" value="UniProtKB-UniPathway"/>
</dbReference>
<dbReference type="GO" id="GO:0006559">
    <property type="term" value="P:L-phenylalanine catabolic process"/>
    <property type="evidence" value="ECO:0007669"/>
    <property type="project" value="UniProtKB-KW"/>
</dbReference>
<dbReference type="CDD" id="cd00332">
    <property type="entry name" value="PAL-HAL"/>
    <property type="match status" value="1"/>
</dbReference>
<dbReference type="FunFam" id="1.10.274.20:FF:000001">
    <property type="entry name" value="Phenylalanine ammonia-lyase"/>
    <property type="match status" value="1"/>
</dbReference>
<dbReference type="FunFam" id="1.10.275.10:FF:000009">
    <property type="entry name" value="Phenylalanine ammonia-lyase"/>
    <property type="match status" value="1"/>
</dbReference>
<dbReference type="FunFam" id="1.20.200.10:FF:000009">
    <property type="entry name" value="Phenylalanine ammonia-lyase"/>
    <property type="match status" value="1"/>
</dbReference>
<dbReference type="Gene3D" id="1.20.200.10">
    <property type="entry name" value="Fumarase/aspartase (Central domain)"/>
    <property type="match status" value="1"/>
</dbReference>
<dbReference type="Gene3D" id="1.10.275.10">
    <property type="entry name" value="Fumarase/aspartase (N-terminal domain)"/>
    <property type="match status" value="1"/>
</dbReference>
<dbReference type="Gene3D" id="1.10.274.20">
    <property type="entry name" value="Phenylalanine ammonia-lyase 1, domain 3"/>
    <property type="match status" value="1"/>
</dbReference>
<dbReference type="InterPro" id="IPR001106">
    <property type="entry name" value="Aromatic_Lyase"/>
</dbReference>
<dbReference type="InterPro" id="IPR024083">
    <property type="entry name" value="Fumarase/histidase_N"/>
</dbReference>
<dbReference type="InterPro" id="IPR008948">
    <property type="entry name" value="L-Aspartase-like"/>
</dbReference>
<dbReference type="InterPro" id="IPR022313">
    <property type="entry name" value="Phe/His_NH3-lyase_AS"/>
</dbReference>
<dbReference type="InterPro" id="IPR005922">
    <property type="entry name" value="Phe_NH3-lyase"/>
</dbReference>
<dbReference type="InterPro" id="IPR023144">
    <property type="entry name" value="Phe_NH3-lyase_shielding_dom_sf"/>
</dbReference>
<dbReference type="NCBIfam" id="TIGR01226">
    <property type="entry name" value="phe_am_lyase"/>
    <property type="match status" value="1"/>
</dbReference>
<dbReference type="PANTHER" id="PTHR10362">
    <property type="entry name" value="HISTIDINE AMMONIA-LYASE"/>
    <property type="match status" value="1"/>
</dbReference>
<dbReference type="Pfam" id="PF00221">
    <property type="entry name" value="Lyase_aromatic"/>
    <property type="match status" value="1"/>
</dbReference>
<dbReference type="SUPFAM" id="SSF48557">
    <property type="entry name" value="L-aspartase-like"/>
    <property type="match status" value="1"/>
</dbReference>
<dbReference type="PROSITE" id="PS00488">
    <property type="entry name" value="PAL_HISTIDASE"/>
    <property type="match status" value="1"/>
</dbReference>
<name>PAL1_PRUAV</name>
<reference key="1">
    <citation type="online journal article" date="1998" name="Plant Gene Register">
        <title>A full-length cDNA for phenylalanine ammonia-lyase cloned from ripe Sweet Cherry fruit (Prunus avium).</title>
        <authorList>
            <person name="Wiersma P.A."/>
            <person name="Wu Z."/>
        </authorList>
        <locator>PGR98-184</locator>
    </citation>
    <scope>NUCLEOTIDE SEQUENCE [MRNA]</scope>
    <source>
        <strain>cv. Summit</strain>
    </source>
</reference>
<gene>
    <name type="primary">PAL1</name>
</gene>
<keyword id="KW-0963">Cytoplasm</keyword>
<keyword id="KW-0456">Lyase</keyword>
<keyword id="KW-0585">Phenylalanine catabolism</keyword>
<keyword id="KW-0587">Phenylpropanoid metabolism</keyword>
<keyword id="KW-1185">Reference proteome</keyword>
<sequence length="717" mass="78000">MATNSIKQNGHKNGSVELPELCIKKDPLNWGVAAETLKGSHLDEVKRMVAEYRKPVVKLGGESLTISQVAAIATHDSGVKVELSESARAGVKASSDWVMDSMSKGTDSYGVTTGFGATSHRRTKQGAALQKELIRFLNAGVFGSTKESGHTLPHQATRAAMLVRINTLLQGYSGIRFEILEVITKFLNNNVTPCLPLRGTITASGDLVPLSYIAGMLTGRPNSKAVGPDGQTLSAAEAFEFVGINSGFFELQPKEGLALVNGTAVGSGLASTVLFDTNILALLSEILSAIFAEVMQGKPEFTDHLTHKLKHHPGQIEAAAIMEHILDGSSYVKAAKKLHEQDPLQKPKQDRYALRTSPQWLGPQIEVIRYSTKSIEREIDSVNDNPLIDVSRNKALHGGNFQGTPIGVSMDNTRLAIASIGKLMFAQFSELVNDFYNNGLPSNLSGGRNPSLDYGFKGAEIAMASYCSELQFLANPVTNHVQSAEQHNQDVNSLGLISSRKTAEAVDILKLMSSTFLVALCQAIDLRHLEENLRNTVKNTVSQVAKRTLTTGVNGELHPSRFCEKDLLKVVDREYVFAYIDDPCSATYPLMQKLRQVLVEHALTNGENEKNASTSIFQKIVAFEEELKVLLPKEVDSARAALDSGSAGVPNRITECRSYPLYKFVREELGAEYLTGEKVRSPGEECDKVFTAICEGKIIDPILDCLEGWNGAPLPIC</sequence>
<evidence type="ECO:0000250" key="1">
    <source>
        <dbReference type="UniProtKB" id="P11544"/>
    </source>
</evidence>
<evidence type="ECO:0000250" key="2">
    <source>
        <dbReference type="UniProtKB" id="P24481"/>
    </source>
</evidence>
<evidence type="ECO:0000250" key="3">
    <source>
        <dbReference type="UniProtKB" id="Q68G84"/>
    </source>
</evidence>
<evidence type="ECO:0000255" key="4">
    <source>
        <dbReference type="PROSITE-ProRule" id="PRU10122"/>
    </source>
</evidence>
<evidence type="ECO:0000305" key="5"/>